<gene>
    <name type="ordered locus">MPN_588</name>
    <name type="ORF">D02_orf531</name>
    <name type="ORF">MP254</name>
</gene>
<name>Y588_MYCPN</name>
<protein>
    <recommendedName>
        <fullName>Uncharacterized lipoprotein MPN_588</fullName>
    </recommendedName>
</protein>
<reference key="1">
    <citation type="journal article" date="1996" name="Nucleic Acids Res.">
        <title>Sequence analysis of 56 kb from the genome of the bacterium Mycoplasma pneumoniae comprising the dnaA region, the atp operon and a cluster of ribosomal protein genes.</title>
        <authorList>
            <person name="Hilbert H."/>
            <person name="Himmelreich R."/>
            <person name="Plagens H."/>
            <person name="Herrmann R."/>
        </authorList>
    </citation>
    <scope>NUCLEOTIDE SEQUENCE [GENOMIC DNA]</scope>
    <source>
        <strain>ATCC 29342 / M129 / Subtype 1</strain>
    </source>
</reference>
<reference key="2">
    <citation type="journal article" date="1996" name="Nucleic Acids Res.">
        <title>Complete sequence analysis of the genome of the bacterium Mycoplasma pneumoniae.</title>
        <authorList>
            <person name="Himmelreich R."/>
            <person name="Hilbert H."/>
            <person name="Plagens H."/>
            <person name="Pirkl E."/>
            <person name="Li B.-C."/>
            <person name="Herrmann R."/>
        </authorList>
    </citation>
    <scope>NUCLEOTIDE SEQUENCE [LARGE SCALE GENOMIC DNA]</scope>
    <source>
        <strain>ATCC 29342 / M129 / Subtype 1</strain>
    </source>
</reference>
<feature type="signal peptide" evidence="1">
    <location>
        <begin position="1"/>
        <end position="22"/>
    </location>
</feature>
<feature type="chain" id="PRO_0000018743" description="Uncharacterized lipoprotein MPN_588">
    <location>
        <begin position="23"/>
        <end position="531"/>
    </location>
</feature>
<feature type="region of interest" description="Disordered" evidence="2">
    <location>
        <begin position="31"/>
        <end position="51"/>
    </location>
</feature>
<feature type="compositionally biased region" description="Low complexity" evidence="2">
    <location>
        <begin position="40"/>
        <end position="51"/>
    </location>
</feature>
<feature type="lipid moiety-binding region" description="N-palmitoyl cysteine" evidence="1">
    <location>
        <position position="23"/>
    </location>
</feature>
<feature type="lipid moiety-binding region" description="S-diacylglycerol cysteine" evidence="1">
    <location>
        <position position="23"/>
    </location>
</feature>
<sequence>MRLQFKLLGFLTLLGTSTILSACAATQPNFEPNNIEESGPITPTTPTTDVPKPTAEVVPVNRGFHFQTNKVPSESDVFKHNYDLTFSLNFTNKSNDIYGTGWLFDWKGDEKALGIDGSFVPSITSNIDNSLLKDDQFTVYLATNLHVADALRNDQDYEPYKKDQNKQDFTENTKTEFFSLGKYLEGEQLKQYISKEENQSANQTDKALVSIQASNIPKTAYTATDFVDMNSYSYNNITTSLPGNYADFAVIEVNLNLKNQRDQQILHDFVKPAIKAYKALGDTLELFSAKPLNQFIEQNYYLLGYPVINKGNNTANLLLAQQKSFDHNNSDHNQKSQWFTKDQSYINKLDRIPVLTNNYRAYNESTGSQLFANQQNESWLNGVVIQDKGVVNFASFSNFTLKYHEKRFQQYGYGLMLNDTNFPGGSSGSPLIGKDNKLNSIYFGVLEIYQSGSLARNDIGMSQILRTPQNDKGSSISKGSYDLIFGDKNTKNYYAKFAKDHQTHLYQKIKESKDEQFRFVETQETTNNLGN</sequence>
<organism>
    <name type="scientific">Mycoplasma pneumoniae (strain ATCC 29342 / M129 / Subtype 1)</name>
    <name type="common">Mycoplasmoides pneumoniae</name>
    <dbReference type="NCBI Taxonomy" id="272634"/>
    <lineage>
        <taxon>Bacteria</taxon>
        <taxon>Bacillati</taxon>
        <taxon>Mycoplasmatota</taxon>
        <taxon>Mycoplasmoidales</taxon>
        <taxon>Mycoplasmoidaceae</taxon>
        <taxon>Mycoplasmoides</taxon>
    </lineage>
</organism>
<keyword id="KW-1003">Cell membrane</keyword>
<keyword id="KW-0449">Lipoprotein</keyword>
<keyword id="KW-0472">Membrane</keyword>
<keyword id="KW-0564">Palmitate</keyword>
<keyword id="KW-1185">Reference proteome</keyword>
<keyword id="KW-0732">Signal</keyword>
<accession>Q50339</accession>
<comment type="subcellular location">
    <subcellularLocation>
        <location evidence="1">Cell membrane</location>
        <topology evidence="1">Lipid-anchor</topology>
    </subcellularLocation>
</comment>
<comment type="similarity">
    <text evidence="3">Belongs to the MG067/MG068/MG395 family.</text>
</comment>
<evidence type="ECO:0000255" key="1">
    <source>
        <dbReference type="PROSITE-ProRule" id="PRU00303"/>
    </source>
</evidence>
<evidence type="ECO:0000256" key="2">
    <source>
        <dbReference type="SAM" id="MobiDB-lite"/>
    </source>
</evidence>
<evidence type="ECO:0000305" key="3"/>
<dbReference type="EMBL" id="U43738">
    <property type="protein sequence ID" value="AAC43668.1"/>
    <property type="molecule type" value="Genomic_DNA"/>
</dbReference>
<dbReference type="EMBL" id="U00089">
    <property type="protein sequence ID" value="AAB95902.1"/>
    <property type="molecule type" value="Genomic_DNA"/>
</dbReference>
<dbReference type="PIR" id="S62796">
    <property type="entry name" value="S62796"/>
</dbReference>
<dbReference type="RefSeq" id="NP_110277.1">
    <property type="nucleotide sequence ID" value="NC_000912.1"/>
</dbReference>
<dbReference type="RefSeq" id="WP_010874945.1">
    <property type="nucleotide sequence ID" value="NZ_OU342337.1"/>
</dbReference>
<dbReference type="STRING" id="272634.MPN_588"/>
<dbReference type="EnsemblBacteria" id="AAB95902">
    <property type="protein sequence ID" value="AAB95902"/>
    <property type="gene ID" value="MPN_588"/>
</dbReference>
<dbReference type="KEGG" id="mpn:MPN_588"/>
<dbReference type="PATRIC" id="fig|272634.6.peg.651"/>
<dbReference type="HOGENOM" id="CLU_038569_1_0_14"/>
<dbReference type="OrthoDB" id="393864at2"/>
<dbReference type="BioCyc" id="MPNE272634:G1GJ3-958-MONOMER"/>
<dbReference type="Proteomes" id="UP000000808">
    <property type="component" value="Chromosome"/>
</dbReference>
<dbReference type="GO" id="GO:0005886">
    <property type="term" value="C:plasma membrane"/>
    <property type="evidence" value="ECO:0007669"/>
    <property type="project" value="UniProtKB-SubCell"/>
</dbReference>
<dbReference type="InterPro" id="IPR022382">
    <property type="entry name" value="Mycoplasma_peptidase_DUF31"/>
</dbReference>
<dbReference type="InterPro" id="IPR022381">
    <property type="entry name" value="Uncharacterised_MG067"/>
</dbReference>
<dbReference type="Pfam" id="PF01732">
    <property type="entry name" value="Mycop_pep_DUF31"/>
    <property type="match status" value="1"/>
</dbReference>
<dbReference type="PRINTS" id="PR00840">
    <property type="entry name" value="Y06768FAMILY"/>
</dbReference>
<dbReference type="PROSITE" id="PS51257">
    <property type="entry name" value="PROKAR_LIPOPROTEIN"/>
    <property type="match status" value="1"/>
</dbReference>
<proteinExistence type="inferred from homology"/>